<accession>A1JRK8</accession>
<feature type="signal peptide" evidence="1">
    <location>
        <begin position="1"/>
        <end position="21"/>
    </location>
</feature>
<feature type="chain" id="PRO_5000201384" description="Tol-Pal system protein TolB" evidence="1">
    <location>
        <begin position="22"/>
        <end position="430"/>
    </location>
</feature>
<gene>
    <name evidence="1" type="primary">tolB</name>
    <name type="ordered locus">YE2932</name>
</gene>
<keyword id="KW-0131">Cell cycle</keyword>
<keyword id="KW-0132">Cell division</keyword>
<keyword id="KW-0574">Periplasm</keyword>
<keyword id="KW-0732">Signal</keyword>
<evidence type="ECO:0000255" key="1">
    <source>
        <dbReference type="HAMAP-Rule" id="MF_00671"/>
    </source>
</evidence>
<organism>
    <name type="scientific">Yersinia enterocolitica serotype O:8 / biotype 1B (strain NCTC 13174 / 8081)</name>
    <dbReference type="NCBI Taxonomy" id="393305"/>
    <lineage>
        <taxon>Bacteria</taxon>
        <taxon>Pseudomonadati</taxon>
        <taxon>Pseudomonadota</taxon>
        <taxon>Gammaproteobacteria</taxon>
        <taxon>Enterobacterales</taxon>
        <taxon>Yersiniaceae</taxon>
        <taxon>Yersinia</taxon>
    </lineage>
</organism>
<name>TOLB_YERE8</name>
<comment type="function">
    <text evidence="1">Part of the Tol-Pal system, which plays a role in outer membrane invagination during cell division and is important for maintaining outer membrane integrity. TolB occupies a key intermediary position in the Tol-Pal system because it communicates directly with both membrane-embedded components, Pal in the outer membrane and TolA in the inner membrane.</text>
</comment>
<comment type="subunit">
    <text evidence="1">The Tol-Pal system is composed of five core proteins: the inner membrane proteins TolA, TolQ and TolR, the periplasmic protein TolB and the outer membrane protein Pal. They form a network linking the inner and outer membranes and the peptidoglycan layer.</text>
</comment>
<comment type="subcellular location">
    <subcellularLocation>
        <location evidence="1">Periplasm</location>
    </subcellularLocation>
</comment>
<comment type="similarity">
    <text evidence="1">Belongs to the TolB family.</text>
</comment>
<sequence>MKQAFRVALGFLVLWASVLHAEVRIEITQGVDSARPIGVVPFKWMGPGTPPEEIGAIVGADLRNSGKFNPIDAARMPQQPSTAAEVTPAAWTALGIDAVVVGQVQPSADGSYVVSYQLVDTSGAAGSVLAQNQYKVTKQWLRYAAHTASDEVFEKLTGIKGAFRTRIAYVVQTNGGKFPHELRVSDYDGYNQFVVHRSPEPLMSPAWSPDGSKIAYVTFESGKSALVIQTLANGAIRQVASFPRHNGAPAFSPDGTKLAFALSKSGSLNLYVMDLGSGQISQVTDGRSNNTEPSWFPDSQNLAYTSDQGGRPQVYKVNINGGAPQRITWEGSQNQNADVSPDGKFLVLVSSNGGAQHIAKQDLVTGAVQVLTDTFLDETPSIAPNGTMVIYSSTQGLGAVLQLVSTDGRFKARLPATDGQVKFPAWSPYL</sequence>
<reference key="1">
    <citation type="journal article" date="2006" name="PLoS Genet.">
        <title>The complete genome sequence and comparative genome analysis of the high pathogenicity Yersinia enterocolitica strain 8081.</title>
        <authorList>
            <person name="Thomson N.R."/>
            <person name="Howard S."/>
            <person name="Wren B.W."/>
            <person name="Holden M.T.G."/>
            <person name="Crossman L."/>
            <person name="Challis G.L."/>
            <person name="Churcher C."/>
            <person name="Mungall K."/>
            <person name="Brooks K."/>
            <person name="Chillingworth T."/>
            <person name="Feltwell T."/>
            <person name="Abdellah Z."/>
            <person name="Hauser H."/>
            <person name="Jagels K."/>
            <person name="Maddison M."/>
            <person name="Moule S."/>
            <person name="Sanders M."/>
            <person name="Whitehead S."/>
            <person name="Quail M.A."/>
            <person name="Dougan G."/>
            <person name="Parkhill J."/>
            <person name="Prentice M.B."/>
        </authorList>
    </citation>
    <scope>NUCLEOTIDE SEQUENCE [LARGE SCALE GENOMIC DNA]</scope>
    <source>
        <strain>NCTC 13174 / 8081</strain>
    </source>
</reference>
<protein>
    <recommendedName>
        <fullName evidence="1">Tol-Pal system protein TolB</fullName>
    </recommendedName>
</protein>
<dbReference type="EMBL" id="AM286415">
    <property type="protein sequence ID" value="CAL12970.1"/>
    <property type="molecule type" value="Genomic_DNA"/>
</dbReference>
<dbReference type="RefSeq" id="WP_005165502.1">
    <property type="nucleotide sequence ID" value="NC_008800.1"/>
</dbReference>
<dbReference type="RefSeq" id="YP_001007120.1">
    <property type="nucleotide sequence ID" value="NC_008800.1"/>
</dbReference>
<dbReference type="SMR" id="A1JRK8"/>
<dbReference type="GeneID" id="31409882"/>
<dbReference type="KEGG" id="yen:YE2932"/>
<dbReference type="PATRIC" id="fig|393305.7.peg.3119"/>
<dbReference type="eggNOG" id="COG0823">
    <property type="taxonomic scope" value="Bacteria"/>
</dbReference>
<dbReference type="HOGENOM" id="CLU_047123_0_0_6"/>
<dbReference type="OrthoDB" id="9802240at2"/>
<dbReference type="Proteomes" id="UP000000642">
    <property type="component" value="Chromosome"/>
</dbReference>
<dbReference type="GO" id="GO:0042597">
    <property type="term" value="C:periplasmic space"/>
    <property type="evidence" value="ECO:0007669"/>
    <property type="project" value="UniProtKB-SubCell"/>
</dbReference>
<dbReference type="GO" id="GO:0051301">
    <property type="term" value="P:cell division"/>
    <property type="evidence" value="ECO:0007669"/>
    <property type="project" value="UniProtKB-UniRule"/>
</dbReference>
<dbReference type="GO" id="GO:0017038">
    <property type="term" value="P:protein import"/>
    <property type="evidence" value="ECO:0007669"/>
    <property type="project" value="InterPro"/>
</dbReference>
<dbReference type="FunFam" id="2.120.10.30:FF:000022">
    <property type="entry name" value="Tol-Pal system protein TolB"/>
    <property type="match status" value="1"/>
</dbReference>
<dbReference type="Gene3D" id="2.120.10.30">
    <property type="entry name" value="TolB, C-terminal domain"/>
    <property type="match status" value="1"/>
</dbReference>
<dbReference type="Gene3D" id="3.40.50.10070">
    <property type="entry name" value="TolB, N-terminal domain"/>
    <property type="match status" value="1"/>
</dbReference>
<dbReference type="HAMAP" id="MF_00671">
    <property type="entry name" value="TolB"/>
    <property type="match status" value="1"/>
</dbReference>
<dbReference type="InterPro" id="IPR011042">
    <property type="entry name" value="6-blade_b-propeller_TolB-like"/>
</dbReference>
<dbReference type="InterPro" id="IPR011659">
    <property type="entry name" value="PD40"/>
</dbReference>
<dbReference type="InterPro" id="IPR014167">
    <property type="entry name" value="Tol-Pal_TolB"/>
</dbReference>
<dbReference type="InterPro" id="IPR007195">
    <property type="entry name" value="TolB_N"/>
</dbReference>
<dbReference type="NCBIfam" id="TIGR02800">
    <property type="entry name" value="propeller_TolB"/>
    <property type="match status" value="1"/>
</dbReference>
<dbReference type="PANTHER" id="PTHR36842:SF1">
    <property type="entry name" value="PROTEIN TOLB"/>
    <property type="match status" value="1"/>
</dbReference>
<dbReference type="PANTHER" id="PTHR36842">
    <property type="entry name" value="PROTEIN TOLB HOMOLOG"/>
    <property type="match status" value="1"/>
</dbReference>
<dbReference type="Pfam" id="PF07676">
    <property type="entry name" value="PD40"/>
    <property type="match status" value="4"/>
</dbReference>
<dbReference type="Pfam" id="PF04052">
    <property type="entry name" value="TolB_N"/>
    <property type="match status" value="1"/>
</dbReference>
<dbReference type="SUPFAM" id="SSF52964">
    <property type="entry name" value="TolB, N-terminal domain"/>
    <property type="match status" value="1"/>
</dbReference>
<dbReference type="SUPFAM" id="SSF69304">
    <property type="entry name" value="Tricorn protease N-terminal domain"/>
    <property type="match status" value="1"/>
</dbReference>
<proteinExistence type="inferred from homology"/>